<keyword id="KW-0963">Cytoplasm</keyword>
<keyword id="KW-0520">NAD</keyword>
<keyword id="KW-0560">Oxidoreductase</keyword>
<keyword id="KW-1185">Reference proteome</keyword>
<comment type="function">
    <text evidence="1">Catalyzes the reduction of 2,3-diketo-L-gulonate in the presence of NADH, to form 3-keto-L-gulonate.</text>
</comment>
<comment type="catalytic activity">
    <reaction evidence="1">
        <text>3-dehydro-L-gulonate + NAD(+) = 2,3-dioxo-L-gulonate + NADH + H(+)</text>
        <dbReference type="Rhea" id="RHEA:21924"/>
        <dbReference type="ChEBI" id="CHEBI:15378"/>
        <dbReference type="ChEBI" id="CHEBI:57441"/>
        <dbReference type="ChEBI" id="CHEBI:57540"/>
        <dbReference type="ChEBI" id="CHEBI:57655"/>
        <dbReference type="ChEBI" id="CHEBI:57945"/>
        <dbReference type="EC" id="1.1.1.130"/>
    </reaction>
</comment>
<comment type="catalytic activity">
    <reaction evidence="1">
        <text>3-dehydro-L-gulonate + NADP(+) = 2,3-dioxo-L-gulonate + NADPH + H(+)</text>
        <dbReference type="Rhea" id="RHEA:21928"/>
        <dbReference type="ChEBI" id="CHEBI:15378"/>
        <dbReference type="ChEBI" id="CHEBI:57441"/>
        <dbReference type="ChEBI" id="CHEBI:57655"/>
        <dbReference type="ChEBI" id="CHEBI:57783"/>
        <dbReference type="ChEBI" id="CHEBI:58349"/>
        <dbReference type="EC" id="1.1.1.130"/>
    </reaction>
</comment>
<comment type="subunit">
    <text evidence="1">Homodimer.</text>
</comment>
<comment type="subcellular location">
    <subcellularLocation>
        <location evidence="1">Cytoplasm</location>
    </subcellularLocation>
</comment>
<comment type="similarity">
    <text evidence="1">Belongs to the LDH2/MDH2 oxidoreductase family. DlgD subfamily.</text>
</comment>
<reference key="1">
    <citation type="journal article" date="2001" name="Nature">
        <title>Complete genome sequence of Salmonella enterica serovar Typhimurium LT2.</title>
        <authorList>
            <person name="McClelland M."/>
            <person name="Sanderson K.E."/>
            <person name="Spieth J."/>
            <person name="Clifton S.W."/>
            <person name="Latreille P."/>
            <person name="Courtney L."/>
            <person name="Porwollik S."/>
            <person name="Ali J."/>
            <person name="Dante M."/>
            <person name="Du F."/>
            <person name="Hou S."/>
            <person name="Layman D."/>
            <person name="Leonard S."/>
            <person name="Nguyen C."/>
            <person name="Scott K."/>
            <person name="Holmes A."/>
            <person name="Grewal N."/>
            <person name="Mulvaney E."/>
            <person name="Ryan E."/>
            <person name="Sun H."/>
            <person name="Florea L."/>
            <person name="Miller W."/>
            <person name="Stoneking T."/>
            <person name="Nhan M."/>
            <person name="Waterston R."/>
            <person name="Wilson R.K."/>
        </authorList>
    </citation>
    <scope>NUCLEOTIDE SEQUENCE [LARGE SCALE GENOMIC DNA]</scope>
    <source>
        <strain>LT2 / SGSC1412 / ATCC 700720</strain>
    </source>
</reference>
<name>DLGD_SALTY</name>
<gene>
    <name evidence="1" type="primary">dlgD</name>
    <name type="ordered locus">STM3668</name>
</gene>
<accession>Q8ZL83</accession>
<evidence type="ECO:0000255" key="1">
    <source>
        <dbReference type="HAMAP-Rule" id="MF_00820"/>
    </source>
</evidence>
<feature type="chain" id="PRO_0000083838" description="2,3-diketo-L-gulonate reductase">
    <location>
        <begin position="1"/>
        <end position="332"/>
    </location>
</feature>
<feature type="active site" description="Proton donor" evidence="1">
    <location>
        <position position="44"/>
    </location>
</feature>
<feature type="binding site" evidence="1">
    <location>
        <begin position="168"/>
        <end position="174"/>
    </location>
    <ligand>
        <name>NAD(+)</name>
        <dbReference type="ChEBI" id="CHEBI:57540"/>
    </ligand>
</feature>
<feature type="binding site" evidence="1">
    <location>
        <begin position="224"/>
        <end position="225"/>
    </location>
    <ligand>
        <name>NAD(+)</name>
        <dbReference type="ChEBI" id="CHEBI:57540"/>
    </ligand>
</feature>
<feature type="binding site" evidence="1">
    <location>
        <begin position="304"/>
        <end position="306"/>
    </location>
    <ligand>
        <name>NAD(+)</name>
        <dbReference type="ChEBI" id="CHEBI:57540"/>
    </ligand>
</feature>
<organism>
    <name type="scientific">Salmonella typhimurium (strain LT2 / SGSC1412 / ATCC 700720)</name>
    <dbReference type="NCBI Taxonomy" id="99287"/>
    <lineage>
        <taxon>Bacteria</taxon>
        <taxon>Pseudomonadati</taxon>
        <taxon>Pseudomonadota</taxon>
        <taxon>Gammaproteobacteria</taxon>
        <taxon>Enterobacterales</taxon>
        <taxon>Enterobacteriaceae</taxon>
        <taxon>Salmonella</taxon>
    </lineage>
</organism>
<proteinExistence type="inferred from homology"/>
<dbReference type="EC" id="1.1.1.130" evidence="1"/>
<dbReference type="EMBL" id="AE006468">
    <property type="protein sequence ID" value="AAL22527.1"/>
    <property type="molecule type" value="Genomic_DNA"/>
</dbReference>
<dbReference type="SMR" id="Q8ZL83"/>
<dbReference type="STRING" id="99287.STM3668"/>
<dbReference type="PaxDb" id="99287-STM3668"/>
<dbReference type="KEGG" id="stm:STM3668"/>
<dbReference type="PATRIC" id="fig|99287.12.peg.3881"/>
<dbReference type="HOGENOM" id="CLU_040452_4_0_6"/>
<dbReference type="OMA" id="GEVGDQY"/>
<dbReference type="PhylomeDB" id="Q8ZL83"/>
<dbReference type="BioCyc" id="SENT99287:STM3668-MONOMER"/>
<dbReference type="Proteomes" id="UP000001014">
    <property type="component" value="Chromosome"/>
</dbReference>
<dbReference type="GO" id="GO:0005737">
    <property type="term" value="C:cytoplasm"/>
    <property type="evidence" value="ECO:0007669"/>
    <property type="project" value="UniProtKB-SubCell"/>
</dbReference>
<dbReference type="GO" id="GO:0047559">
    <property type="term" value="F:3-dehydro-L-gulonate 2-dehydrogenase activity"/>
    <property type="evidence" value="ECO:0007669"/>
    <property type="project" value="UniProtKB-UniRule"/>
</dbReference>
<dbReference type="GO" id="GO:0070403">
    <property type="term" value="F:NAD+ binding"/>
    <property type="evidence" value="ECO:0007669"/>
    <property type="project" value="InterPro"/>
</dbReference>
<dbReference type="Gene3D" id="1.10.1530.10">
    <property type="match status" value="1"/>
</dbReference>
<dbReference type="Gene3D" id="3.30.1370.60">
    <property type="entry name" value="Hypothetical oxidoreductase yiak, domain 2"/>
    <property type="match status" value="1"/>
</dbReference>
<dbReference type="Gene3D" id="3.30.60.50">
    <property type="entry name" value="Hypothetical oxidoreductase yiak, domain 3"/>
    <property type="match status" value="1"/>
</dbReference>
<dbReference type="HAMAP" id="MF_00820">
    <property type="entry name" value="Diketo_gul_reduc"/>
    <property type="match status" value="1"/>
</dbReference>
<dbReference type="InterPro" id="IPR023689">
    <property type="entry name" value="Diketo_gul_Rdtase"/>
</dbReference>
<dbReference type="InterPro" id="IPR043144">
    <property type="entry name" value="Mal/L-sulf/L-lact_DH-like_ah"/>
</dbReference>
<dbReference type="InterPro" id="IPR043143">
    <property type="entry name" value="Mal/L-sulf/L-lact_DH-like_NADP"/>
</dbReference>
<dbReference type="InterPro" id="IPR036111">
    <property type="entry name" value="Mal/L-sulfo/L-lacto_DH-like_sf"/>
</dbReference>
<dbReference type="InterPro" id="IPR003767">
    <property type="entry name" value="Malate/L-lactate_DH-like"/>
</dbReference>
<dbReference type="NCBIfam" id="NF009750">
    <property type="entry name" value="PRK13260.1"/>
    <property type="match status" value="1"/>
</dbReference>
<dbReference type="PANTHER" id="PTHR11091:SF3">
    <property type="entry name" value="2,3-DIKETO-L-GULONATE REDUCTASE"/>
    <property type="match status" value="1"/>
</dbReference>
<dbReference type="PANTHER" id="PTHR11091">
    <property type="entry name" value="OXIDOREDUCTASE-RELATED"/>
    <property type="match status" value="1"/>
</dbReference>
<dbReference type="Pfam" id="PF02615">
    <property type="entry name" value="Ldh_2"/>
    <property type="match status" value="1"/>
</dbReference>
<dbReference type="SUPFAM" id="SSF89733">
    <property type="entry name" value="L-sulfolactate dehydrogenase-like"/>
    <property type="match status" value="1"/>
</dbReference>
<sequence length="332" mass="36771">MKVTFEELKGAFYRVLRSRNIAEDTADECAEMFARTTESGVYSHGVNRFPRFIQQLDNGDIIPDAKPQRVTSLGAIEQWDAQRAIGNLTAKKMMDRAIELASDHGIGLVALRNANHWMRGGSYGWQAAEKGYIGICWTNSIAVMPPWGAKECRIGTNPLIVAIPSTPITMVDMSMSMFSYGMLEVNRLAGRELPVDGGFDDNGQLTKEPGVIEKNRRILPMGYWKGSGLSIVLDMIATLLSNGSSVAEVTQENSDEYGVSQIFIAIEVDKLIDGATRDAKLQRIMDFITTAERADDNVAIRLPGHEFTKLLDDNRRHGITIDDSVWAKIQAL</sequence>
<protein>
    <recommendedName>
        <fullName evidence="1">2,3-diketo-L-gulonate reductase</fullName>
        <shortName evidence="1">2,3-DKG reductase</shortName>
        <ecNumber evidence="1">1.1.1.130</ecNumber>
    </recommendedName>
    <alternativeName>
        <fullName evidence="1">3-dehydro-L-gulonate 2-dehydrogenase</fullName>
    </alternativeName>
</protein>